<protein>
    <recommendedName>
        <fullName>Mitochondrial intermembrane space import and assembly protein 40</fullName>
    </recommendedName>
    <alternativeName>
        <fullName>Mitochondrial import inner membrane translocase TIM40</fullName>
    </alternativeName>
</protein>
<keyword id="KW-1015">Disulfide bond</keyword>
<keyword id="KW-0472">Membrane</keyword>
<keyword id="KW-0496">Mitochondrion</keyword>
<keyword id="KW-0999">Mitochondrion inner membrane</keyword>
<keyword id="KW-0560">Oxidoreductase</keyword>
<keyword id="KW-0653">Protein transport</keyword>
<keyword id="KW-0676">Redox-active center</keyword>
<keyword id="KW-1185">Reference proteome</keyword>
<keyword id="KW-0735">Signal-anchor</keyword>
<keyword id="KW-0809">Transit peptide</keyword>
<keyword id="KW-0811">Translocation</keyword>
<keyword id="KW-0812">Transmembrane</keyword>
<keyword id="KW-1133">Transmembrane helix</keyword>
<keyword id="KW-0813">Transport</keyword>
<feature type="transit peptide" description="Mitochondrion" evidence="2">
    <location>
        <begin position="1"/>
        <end position="28"/>
    </location>
</feature>
<feature type="chain" id="PRO_0000235293" description="Mitochondrial intermembrane space import and assembly protein 40">
    <location>
        <begin position="29"/>
        <end position="247"/>
    </location>
</feature>
<feature type="topological domain" description="Mitochondrial matrix" evidence="2">
    <location>
        <begin position="29"/>
        <end position="45"/>
    </location>
</feature>
<feature type="transmembrane region" description="Helical; Signal-anchor for type II membrane protein" evidence="2">
    <location>
        <begin position="46"/>
        <end position="63"/>
    </location>
</feature>
<feature type="topological domain" description="Mitochondrial intermembrane" evidence="2">
    <location>
        <begin position="64"/>
        <end position="247"/>
    </location>
</feature>
<feature type="domain" description="CHCH" evidence="3">
    <location>
        <begin position="157"/>
        <end position="201"/>
    </location>
</feature>
<feature type="region of interest" description="Disordered" evidence="4">
    <location>
        <begin position="81"/>
        <end position="114"/>
    </location>
</feature>
<feature type="region of interest" description="Disordered" evidence="4">
    <location>
        <begin position="217"/>
        <end position="247"/>
    </location>
</feature>
<feature type="short sequence motif" description="Cx9C motif 1" evidence="3">
    <location>
        <begin position="160"/>
        <end position="170"/>
    </location>
</feature>
<feature type="short sequence motif" description="Cx9C motif 2" evidence="3">
    <location>
        <begin position="183"/>
        <end position="193"/>
    </location>
</feature>
<feature type="compositionally biased region" description="Basic and acidic residues" evidence="4">
    <location>
        <begin position="81"/>
        <end position="96"/>
    </location>
</feature>
<feature type="disulfide bond" description="Redox-active" evidence="1">
    <location>
        <begin position="149"/>
        <end position="151"/>
    </location>
</feature>
<feature type="disulfide bond" evidence="3">
    <location>
        <begin position="160"/>
        <end position="193"/>
    </location>
</feature>
<feature type="disulfide bond" evidence="3">
    <location>
        <begin position="170"/>
        <end position="183"/>
    </location>
</feature>
<reference key="1">
    <citation type="journal article" date="2006" name="Nature">
        <title>Insights from the genome of the biotrophic fungal plant pathogen Ustilago maydis.</title>
        <authorList>
            <person name="Kaemper J."/>
            <person name="Kahmann R."/>
            <person name="Boelker M."/>
            <person name="Ma L.-J."/>
            <person name="Brefort T."/>
            <person name="Saville B.J."/>
            <person name="Banuett F."/>
            <person name="Kronstad J.W."/>
            <person name="Gold S.E."/>
            <person name="Mueller O."/>
            <person name="Perlin M.H."/>
            <person name="Woesten H.A.B."/>
            <person name="de Vries R."/>
            <person name="Ruiz-Herrera J."/>
            <person name="Reynaga-Pena C.G."/>
            <person name="Snetselaar K."/>
            <person name="McCann M."/>
            <person name="Perez-Martin J."/>
            <person name="Feldbruegge M."/>
            <person name="Basse C.W."/>
            <person name="Steinberg G."/>
            <person name="Ibeas J.I."/>
            <person name="Holloman W."/>
            <person name="Guzman P."/>
            <person name="Farman M.L."/>
            <person name="Stajich J.E."/>
            <person name="Sentandreu R."/>
            <person name="Gonzalez-Prieto J.M."/>
            <person name="Kennell J.C."/>
            <person name="Molina L."/>
            <person name="Schirawski J."/>
            <person name="Mendoza-Mendoza A."/>
            <person name="Greilinger D."/>
            <person name="Muench K."/>
            <person name="Roessel N."/>
            <person name="Scherer M."/>
            <person name="Vranes M."/>
            <person name="Ladendorf O."/>
            <person name="Vincon V."/>
            <person name="Fuchs U."/>
            <person name="Sandrock B."/>
            <person name="Meng S."/>
            <person name="Ho E.C.H."/>
            <person name="Cahill M.J."/>
            <person name="Boyce K.J."/>
            <person name="Klose J."/>
            <person name="Klosterman S.J."/>
            <person name="Deelstra H.J."/>
            <person name="Ortiz-Castellanos L."/>
            <person name="Li W."/>
            <person name="Sanchez-Alonso P."/>
            <person name="Schreier P.H."/>
            <person name="Haeuser-Hahn I."/>
            <person name="Vaupel M."/>
            <person name="Koopmann E."/>
            <person name="Friedrich G."/>
            <person name="Voss H."/>
            <person name="Schlueter T."/>
            <person name="Margolis J."/>
            <person name="Platt D."/>
            <person name="Swimmer C."/>
            <person name="Gnirke A."/>
            <person name="Chen F."/>
            <person name="Vysotskaia V."/>
            <person name="Mannhaupt G."/>
            <person name="Gueldener U."/>
            <person name="Muensterkoetter M."/>
            <person name="Haase D."/>
            <person name="Oesterheld M."/>
            <person name="Mewes H.-W."/>
            <person name="Mauceli E.W."/>
            <person name="DeCaprio D."/>
            <person name="Wade C.M."/>
            <person name="Butler J."/>
            <person name="Young S.K."/>
            <person name="Jaffe D.B."/>
            <person name="Calvo S.E."/>
            <person name="Nusbaum C."/>
            <person name="Galagan J.E."/>
            <person name="Birren B.W."/>
        </authorList>
    </citation>
    <scope>NUCLEOTIDE SEQUENCE [LARGE SCALE GENOMIC DNA]</scope>
    <source>
        <strain>DSM 14603 / FGSC 9021 / UM521</strain>
    </source>
</reference>
<reference key="2">
    <citation type="submission" date="2014-09" db="EMBL/GenBank/DDBJ databases">
        <authorList>
            <person name="Gueldener U."/>
            <person name="Muensterkoetter M."/>
            <person name="Walter M.C."/>
            <person name="Mannhaupt G."/>
            <person name="Kahmann R."/>
        </authorList>
    </citation>
    <scope>GENOME REANNOTATION</scope>
    <source>
        <strain>DSM 14603 / FGSC 9021 / UM521</strain>
    </source>
</reference>
<comment type="function">
    <text evidence="1">Required for the import and folding of small cysteine-containing proteins (small Tim) in the mitochondrial intermembrane space (IMS). Forms a redox cycle with ERV1 that involves a disulfide relay system. Precursor proteins to be imported into the IMS are translocated in their reduced form into the mitochondria. The oxidized form of MIA40 forms a transient intermolecular disulfide bridge with the reduced precursor protein, resulting in oxidation of the precursor protein that now contains an intramolecular disulfide bond and is able to undergo folding in the IMS (By similarity).</text>
</comment>
<comment type="cofactor">
    <cofactor evidence="1">
        <name>Cu(2+)</name>
        <dbReference type="ChEBI" id="CHEBI:29036"/>
    </cofactor>
    <cofactor evidence="1">
        <name>Zn(2+)</name>
        <dbReference type="ChEBI" id="CHEBI:29105"/>
    </cofactor>
    <text evidence="1">Cu(2+) or Zn(2+).</text>
</comment>
<comment type="subunit">
    <text evidence="1">Monomer.</text>
</comment>
<comment type="subcellular location">
    <subcellularLocation>
        <location evidence="1">Mitochondrion inner membrane</location>
        <topology evidence="1">Single-pass type II membrane protein</topology>
        <orientation evidence="1">Intermembrane side</orientation>
    </subcellularLocation>
</comment>
<comment type="domain">
    <text evidence="1">The CHCH domain contains a conserved twin Cys-X(9)-Cys motif which is required for import and stability of MIA40 in mitochondria.</text>
</comment>
<name>MIA40_MYCMD</name>
<dbReference type="EMBL" id="CM003148">
    <property type="protein sequence ID" value="KIS68545.1"/>
    <property type="molecule type" value="Genomic_DNA"/>
</dbReference>
<dbReference type="RefSeq" id="XP_011390053.1">
    <property type="nucleotide sequence ID" value="XM_011391751.1"/>
</dbReference>
<dbReference type="SMR" id="Q4P8D2"/>
<dbReference type="STRING" id="237631.Q4P8D2"/>
<dbReference type="EnsemblFungi" id="KIS68545">
    <property type="protein sequence ID" value="KIS68545"/>
    <property type="gene ID" value="UMAG_03631"/>
</dbReference>
<dbReference type="GeneID" id="23564040"/>
<dbReference type="KEGG" id="uma:UMAG_03631"/>
<dbReference type="VEuPathDB" id="FungiDB:UMAG_03631"/>
<dbReference type="eggNOG" id="KOG4149">
    <property type="taxonomic scope" value="Eukaryota"/>
</dbReference>
<dbReference type="HOGENOM" id="CLU_054990_1_3_1"/>
<dbReference type="InParanoid" id="Q4P8D2"/>
<dbReference type="OMA" id="SSAIQCE"/>
<dbReference type="OrthoDB" id="7481291at2759"/>
<dbReference type="Proteomes" id="UP000000561">
    <property type="component" value="Chromosome 9"/>
</dbReference>
<dbReference type="GO" id="GO:0005743">
    <property type="term" value="C:mitochondrial inner membrane"/>
    <property type="evidence" value="ECO:0007669"/>
    <property type="project" value="UniProtKB-SubCell"/>
</dbReference>
<dbReference type="GO" id="GO:0005758">
    <property type="term" value="C:mitochondrial intermembrane space"/>
    <property type="evidence" value="ECO:0000318"/>
    <property type="project" value="GO_Central"/>
</dbReference>
<dbReference type="GO" id="GO:0015035">
    <property type="term" value="F:protein-disulfide reductase activity"/>
    <property type="evidence" value="ECO:0000318"/>
    <property type="project" value="GO_Central"/>
</dbReference>
<dbReference type="GO" id="GO:0045041">
    <property type="term" value="P:protein import into mitochondrial intermembrane space"/>
    <property type="evidence" value="ECO:0000318"/>
    <property type="project" value="GO_Central"/>
</dbReference>
<dbReference type="FunFam" id="1.10.287.2900:FF:000002">
    <property type="entry name" value="Mitochondrial intermembrane space import and assembly protein"/>
    <property type="match status" value="1"/>
</dbReference>
<dbReference type="Gene3D" id="1.10.287.2900">
    <property type="match status" value="1"/>
</dbReference>
<dbReference type="InterPro" id="IPR010625">
    <property type="entry name" value="CHCH"/>
</dbReference>
<dbReference type="InterPro" id="IPR039289">
    <property type="entry name" value="CHCHD4"/>
</dbReference>
<dbReference type="PANTHER" id="PTHR21622">
    <property type="entry name" value="COILED-COIL-HELIX-COILED-COIL-HELIX DOMAIN CONTAINING 4"/>
    <property type="match status" value="1"/>
</dbReference>
<dbReference type="PANTHER" id="PTHR21622:SF0">
    <property type="entry name" value="COILED-COIL-HELIX-COILED-COIL-HELIX DOMAIN CONTAINING 4"/>
    <property type="match status" value="1"/>
</dbReference>
<dbReference type="Pfam" id="PF06747">
    <property type="entry name" value="CHCH"/>
    <property type="match status" value="1"/>
</dbReference>
<dbReference type="PROSITE" id="PS51808">
    <property type="entry name" value="CHCH"/>
    <property type="match status" value="1"/>
</dbReference>
<sequence>MLSSKLVACSAGRSVQRISRTFLPAMRGVATKAAAGPSRQSALSSYSIAAVTAIGVGASFYALQSRSSAIQCEPRQAWHDRLKPKEAKGDATLHKDAHTRHAPAEVQDERVEPVEETPVAIEVAVEESEEQTGQQSAYDPETGEINWDCPCLGGMAHGPCGEQFKLAFSCFVYSEAEPKGIDCVDKFKAMQDCFREHPDVYKDEIEDDEAANAQFEKEEANAKSNGLNDAAQEAVEESSGGKEGASA</sequence>
<proteinExistence type="inferred from homology"/>
<gene>
    <name type="primary">MIA40</name>
    <name type="synonym">TIM40</name>
    <name type="ORF">UMAG_03631</name>
</gene>
<evidence type="ECO:0000250" key="1"/>
<evidence type="ECO:0000255" key="2"/>
<evidence type="ECO:0000255" key="3">
    <source>
        <dbReference type="PROSITE-ProRule" id="PRU01150"/>
    </source>
</evidence>
<evidence type="ECO:0000256" key="4">
    <source>
        <dbReference type="SAM" id="MobiDB-lite"/>
    </source>
</evidence>
<accession>Q4P8D2</accession>
<accession>A0A0D1E1T3</accession>
<organism>
    <name type="scientific">Mycosarcoma maydis</name>
    <name type="common">Corn smut fungus</name>
    <name type="synonym">Ustilago maydis</name>
    <dbReference type="NCBI Taxonomy" id="5270"/>
    <lineage>
        <taxon>Eukaryota</taxon>
        <taxon>Fungi</taxon>
        <taxon>Dikarya</taxon>
        <taxon>Basidiomycota</taxon>
        <taxon>Ustilaginomycotina</taxon>
        <taxon>Ustilaginomycetes</taxon>
        <taxon>Ustilaginales</taxon>
        <taxon>Ustilaginaceae</taxon>
        <taxon>Mycosarcoma</taxon>
    </lineage>
</organism>